<reference key="1">
    <citation type="submission" date="2006-12" db="EMBL/GenBank/DDBJ databases">
        <title>Complete sequence of chromosome 1 of Acidovorax sp. JS42.</title>
        <authorList>
            <person name="Copeland A."/>
            <person name="Lucas S."/>
            <person name="Lapidus A."/>
            <person name="Barry K."/>
            <person name="Detter J.C."/>
            <person name="Glavina del Rio T."/>
            <person name="Dalin E."/>
            <person name="Tice H."/>
            <person name="Pitluck S."/>
            <person name="Chertkov O."/>
            <person name="Brettin T."/>
            <person name="Bruce D."/>
            <person name="Han C."/>
            <person name="Tapia R."/>
            <person name="Gilna P."/>
            <person name="Schmutz J."/>
            <person name="Larimer F."/>
            <person name="Land M."/>
            <person name="Hauser L."/>
            <person name="Kyrpides N."/>
            <person name="Kim E."/>
            <person name="Stahl D."/>
            <person name="Richardson P."/>
        </authorList>
    </citation>
    <scope>NUCLEOTIDE SEQUENCE [LARGE SCALE GENOMIC DNA]</scope>
    <source>
        <strain>JS42</strain>
    </source>
</reference>
<sequence>MPELPEVEVTRRSFAGAIEGATVRGITVGKPLRWPLGTEPAVLVGRRVCGVRRRGKYLLLDLDEGLLLIHLGMSGSLRFARDLPARGAHDHFELITDQGTLRLHDPRRFGAVVWAAGESDPRARKLLDGWGLEPLGEDFAFETFHAGLRAKRTPIKQLLLAGTVVVGVGNIYACEVLFLAGIRPTTRACAIGPQRARRLHGAIREVLARAVERGGSTLRDFSSADGSAGHFQLEANVYGRAGLPCRQCGTPVRLLRQGQRSTYFCPHCQRA</sequence>
<comment type="function">
    <text evidence="2">Involved in base excision repair of DNA damaged by oxidation or by mutagenic agents. Acts as a DNA glycosylase that recognizes and removes damaged bases. Has a preference for oxidized purines, such as 7,8-dihydro-8-oxoguanine (8-oxoG). Has AP (apurinic/apyrimidinic) lyase activity and introduces nicks in the DNA strand. Cleaves the DNA backbone by beta-delta elimination to generate a single-strand break at the site of the removed base with both 3'- and 5'-phosphates.</text>
</comment>
<comment type="catalytic activity">
    <reaction evidence="2">
        <text>Hydrolysis of DNA containing ring-opened 7-methylguanine residues, releasing 2,6-diamino-4-hydroxy-5-(N-methyl)formamidopyrimidine.</text>
        <dbReference type="EC" id="3.2.2.23"/>
    </reaction>
</comment>
<comment type="catalytic activity">
    <reaction evidence="2">
        <text>2'-deoxyribonucleotide-(2'-deoxyribose 5'-phosphate)-2'-deoxyribonucleotide-DNA = a 3'-end 2'-deoxyribonucleotide-(2,3-dehydro-2,3-deoxyribose 5'-phosphate)-DNA + a 5'-end 5'-phospho-2'-deoxyribonucleoside-DNA + H(+)</text>
        <dbReference type="Rhea" id="RHEA:66592"/>
        <dbReference type="Rhea" id="RHEA-COMP:13180"/>
        <dbReference type="Rhea" id="RHEA-COMP:16897"/>
        <dbReference type="Rhea" id="RHEA-COMP:17067"/>
        <dbReference type="ChEBI" id="CHEBI:15378"/>
        <dbReference type="ChEBI" id="CHEBI:136412"/>
        <dbReference type="ChEBI" id="CHEBI:157695"/>
        <dbReference type="ChEBI" id="CHEBI:167181"/>
        <dbReference type="EC" id="4.2.99.18"/>
    </reaction>
</comment>
<comment type="cofactor">
    <cofactor evidence="2">
        <name>Zn(2+)</name>
        <dbReference type="ChEBI" id="CHEBI:29105"/>
    </cofactor>
    <text evidence="2">Binds 1 zinc ion per subunit.</text>
</comment>
<comment type="subunit">
    <text evidence="2">Monomer.</text>
</comment>
<comment type="similarity">
    <text evidence="2">Belongs to the FPG family.</text>
</comment>
<feature type="initiator methionine" description="Removed" evidence="1">
    <location>
        <position position="1"/>
    </location>
</feature>
<feature type="chain" id="PRO_1000008668" description="Formamidopyrimidine-DNA glycosylase">
    <location>
        <begin position="2"/>
        <end position="271"/>
    </location>
</feature>
<feature type="zinc finger region" description="FPG-type" evidence="2">
    <location>
        <begin position="236"/>
        <end position="270"/>
    </location>
</feature>
<feature type="active site" description="Schiff-base intermediate with DNA" evidence="2">
    <location>
        <position position="2"/>
    </location>
</feature>
<feature type="active site" description="Proton donor" evidence="2">
    <location>
        <position position="3"/>
    </location>
</feature>
<feature type="active site" description="Proton donor; for beta-elimination activity" evidence="2">
    <location>
        <position position="56"/>
    </location>
</feature>
<feature type="active site" description="Proton donor; for delta-elimination activity" evidence="2">
    <location>
        <position position="260"/>
    </location>
</feature>
<feature type="binding site" evidence="2">
    <location>
        <position position="89"/>
    </location>
    <ligand>
        <name>DNA</name>
        <dbReference type="ChEBI" id="CHEBI:16991"/>
    </ligand>
</feature>
<feature type="binding site" evidence="2">
    <location>
        <position position="107"/>
    </location>
    <ligand>
        <name>DNA</name>
        <dbReference type="ChEBI" id="CHEBI:16991"/>
    </ligand>
</feature>
<feature type="binding site" evidence="2">
    <location>
        <position position="151"/>
    </location>
    <ligand>
        <name>DNA</name>
        <dbReference type="ChEBI" id="CHEBI:16991"/>
    </ligand>
</feature>
<gene>
    <name evidence="2" type="primary">mutM</name>
    <name evidence="2" type="synonym">fpg</name>
    <name type="ordered locus">Ajs_0899</name>
</gene>
<proteinExistence type="inferred from homology"/>
<name>FPG_ACISJ</name>
<evidence type="ECO:0000250" key="1"/>
<evidence type="ECO:0000255" key="2">
    <source>
        <dbReference type="HAMAP-Rule" id="MF_00103"/>
    </source>
</evidence>
<dbReference type="EC" id="3.2.2.23" evidence="2"/>
<dbReference type="EC" id="4.2.99.18" evidence="2"/>
<dbReference type="EMBL" id="CP000539">
    <property type="protein sequence ID" value="ABM41141.1"/>
    <property type="molecule type" value="Genomic_DNA"/>
</dbReference>
<dbReference type="SMR" id="A1W4G6"/>
<dbReference type="STRING" id="232721.Ajs_0899"/>
<dbReference type="KEGG" id="ajs:Ajs_0899"/>
<dbReference type="eggNOG" id="COG0266">
    <property type="taxonomic scope" value="Bacteria"/>
</dbReference>
<dbReference type="HOGENOM" id="CLU_038423_1_1_4"/>
<dbReference type="Proteomes" id="UP000000645">
    <property type="component" value="Chromosome"/>
</dbReference>
<dbReference type="GO" id="GO:0034039">
    <property type="term" value="F:8-oxo-7,8-dihydroguanine DNA N-glycosylase activity"/>
    <property type="evidence" value="ECO:0007669"/>
    <property type="project" value="TreeGrafter"/>
</dbReference>
<dbReference type="GO" id="GO:0140078">
    <property type="term" value="F:class I DNA-(apurinic or apyrimidinic site) endonuclease activity"/>
    <property type="evidence" value="ECO:0007669"/>
    <property type="project" value="UniProtKB-EC"/>
</dbReference>
<dbReference type="GO" id="GO:0003684">
    <property type="term" value="F:damaged DNA binding"/>
    <property type="evidence" value="ECO:0007669"/>
    <property type="project" value="InterPro"/>
</dbReference>
<dbReference type="GO" id="GO:0008270">
    <property type="term" value="F:zinc ion binding"/>
    <property type="evidence" value="ECO:0007669"/>
    <property type="project" value="UniProtKB-UniRule"/>
</dbReference>
<dbReference type="GO" id="GO:0006284">
    <property type="term" value="P:base-excision repair"/>
    <property type="evidence" value="ECO:0007669"/>
    <property type="project" value="InterPro"/>
</dbReference>
<dbReference type="FunFam" id="1.10.8.50:FF:000003">
    <property type="entry name" value="Formamidopyrimidine-DNA glycosylase"/>
    <property type="match status" value="1"/>
</dbReference>
<dbReference type="Gene3D" id="1.10.8.50">
    <property type="match status" value="1"/>
</dbReference>
<dbReference type="Gene3D" id="3.20.190.10">
    <property type="entry name" value="MutM-like, N-terminal"/>
    <property type="match status" value="1"/>
</dbReference>
<dbReference type="HAMAP" id="MF_00103">
    <property type="entry name" value="Fapy_DNA_glycosyl"/>
    <property type="match status" value="1"/>
</dbReference>
<dbReference type="InterPro" id="IPR015886">
    <property type="entry name" value="DNA_glyclase/AP_lyase_DNA-bd"/>
</dbReference>
<dbReference type="InterPro" id="IPR015887">
    <property type="entry name" value="DNA_glyclase_Znf_dom_DNA_BS"/>
</dbReference>
<dbReference type="InterPro" id="IPR020629">
    <property type="entry name" value="Formamido-pyr_DNA_Glyclase"/>
</dbReference>
<dbReference type="InterPro" id="IPR012319">
    <property type="entry name" value="FPG_cat"/>
</dbReference>
<dbReference type="InterPro" id="IPR035937">
    <property type="entry name" value="MutM-like_N-ter"/>
</dbReference>
<dbReference type="InterPro" id="IPR010979">
    <property type="entry name" value="Ribosomal_uS13-like_H2TH"/>
</dbReference>
<dbReference type="InterPro" id="IPR000214">
    <property type="entry name" value="Znf_DNA_glyclase/AP_lyase"/>
</dbReference>
<dbReference type="InterPro" id="IPR010663">
    <property type="entry name" value="Znf_FPG/IleRS"/>
</dbReference>
<dbReference type="NCBIfam" id="TIGR00577">
    <property type="entry name" value="fpg"/>
    <property type="match status" value="1"/>
</dbReference>
<dbReference type="NCBIfam" id="NF002211">
    <property type="entry name" value="PRK01103.1"/>
    <property type="match status" value="1"/>
</dbReference>
<dbReference type="PANTHER" id="PTHR22993">
    <property type="entry name" value="FORMAMIDOPYRIMIDINE-DNA GLYCOSYLASE"/>
    <property type="match status" value="1"/>
</dbReference>
<dbReference type="PANTHER" id="PTHR22993:SF9">
    <property type="entry name" value="FORMAMIDOPYRIMIDINE-DNA GLYCOSYLASE"/>
    <property type="match status" value="1"/>
</dbReference>
<dbReference type="Pfam" id="PF01149">
    <property type="entry name" value="Fapy_DNA_glyco"/>
    <property type="match status" value="1"/>
</dbReference>
<dbReference type="Pfam" id="PF06831">
    <property type="entry name" value="H2TH"/>
    <property type="match status" value="1"/>
</dbReference>
<dbReference type="Pfam" id="PF06827">
    <property type="entry name" value="zf-FPG_IleRS"/>
    <property type="match status" value="1"/>
</dbReference>
<dbReference type="SMART" id="SM00898">
    <property type="entry name" value="Fapy_DNA_glyco"/>
    <property type="match status" value="1"/>
</dbReference>
<dbReference type="SMART" id="SM01232">
    <property type="entry name" value="H2TH"/>
    <property type="match status" value="1"/>
</dbReference>
<dbReference type="SUPFAM" id="SSF57716">
    <property type="entry name" value="Glucocorticoid receptor-like (DNA-binding domain)"/>
    <property type="match status" value="1"/>
</dbReference>
<dbReference type="SUPFAM" id="SSF81624">
    <property type="entry name" value="N-terminal domain of MutM-like DNA repair proteins"/>
    <property type="match status" value="1"/>
</dbReference>
<dbReference type="SUPFAM" id="SSF46946">
    <property type="entry name" value="S13-like H2TH domain"/>
    <property type="match status" value="1"/>
</dbReference>
<dbReference type="PROSITE" id="PS51068">
    <property type="entry name" value="FPG_CAT"/>
    <property type="match status" value="1"/>
</dbReference>
<dbReference type="PROSITE" id="PS01242">
    <property type="entry name" value="ZF_FPG_1"/>
    <property type="match status" value="1"/>
</dbReference>
<dbReference type="PROSITE" id="PS51066">
    <property type="entry name" value="ZF_FPG_2"/>
    <property type="match status" value="1"/>
</dbReference>
<accession>A1W4G6</accession>
<organism>
    <name type="scientific">Acidovorax sp. (strain JS42)</name>
    <dbReference type="NCBI Taxonomy" id="232721"/>
    <lineage>
        <taxon>Bacteria</taxon>
        <taxon>Pseudomonadati</taxon>
        <taxon>Pseudomonadota</taxon>
        <taxon>Betaproteobacteria</taxon>
        <taxon>Burkholderiales</taxon>
        <taxon>Comamonadaceae</taxon>
        <taxon>Acidovorax</taxon>
    </lineage>
</organism>
<keyword id="KW-0227">DNA damage</keyword>
<keyword id="KW-0234">DNA repair</keyword>
<keyword id="KW-0238">DNA-binding</keyword>
<keyword id="KW-0326">Glycosidase</keyword>
<keyword id="KW-0378">Hydrolase</keyword>
<keyword id="KW-0456">Lyase</keyword>
<keyword id="KW-0479">Metal-binding</keyword>
<keyword id="KW-0511">Multifunctional enzyme</keyword>
<keyword id="KW-0862">Zinc</keyword>
<keyword id="KW-0863">Zinc-finger</keyword>
<protein>
    <recommendedName>
        <fullName evidence="2">Formamidopyrimidine-DNA glycosylase</fullName>
        <shortName evidence="2">Fapy-DNA glycosylase</shortName>
        <ecNumber evidence="2">3.2.2.23</ecNumber>
    </recommendedName>
    <alternativeName>
        <fullName evidence="2">DNA-(apurinic or apyrimidinic site) lyase MutM</fullName>
        <shortName evidence="2">AP lyase MutM</shortName>
        <ecNumber evidence="2">4.2.99.18</ecNumber>
    </alternativeName>
</protein>